<gene>
    <name evidence="1" type="primary">fbp</name>
    <name type="ordered locus">Gura_2378</name>
</gene>
<feature type="chain" id="PRO_0000364561" description="Fructose-1,6-bisphosphatase class 1">
    <location>
        <begin position="1"/>
        <end position="313"/>
    </location>
</feature>
<feature type="binding site" evidence="1">
    <location>
        <position position="90"/>
    </location>
    <ligand>
        <name>Mg(2+)</name>
        <dbReference type="ChEBI" id="CHEBI:18420"/>
        <label>1</label>
    </ligand>
</feature>
<feature type="binding site" evidence="1">
    <location>
        <position position="111"/>
    </location>
    <ligand>
        <name>Mg(2+)</name>
        <dbReference type="ChEBI" id="CHEBI:18420"/>
        <label>1</label>
    </ligand>
</feature>
<feature type="binding site" evidence="1">
    <location>
        <position position="111"/>
    </location>
    <ligand>
        <name>Mg(2+)</name>
        <dbReference type="ChEBI" id="CHEBI:18420"/>
        <label>2</label>
    </ligand>
</feature>
<feature type="binding site" evidence="1">
    <location>
        <position position="113"/>
    </location>
    <ligand>
        <name>Mg(2+)</name>
        <dbReference type="ChEBI" id="CHEBI:18420"/>
        <label>1</label>
    </ligand>
</feature>
<feature type="binding site" evidence="1">
    <location>
        <begin position="114"/>
        <end position="117"/>
    </location>
    <ligand>
        <name>substrate</name>
    </ligand>
</feature>
<feature type="binding site" evidence="1">
    <location>
        <position position="114"/>
    </location>
    <ligand>
        <name>Mg(2+)</name>
        <dbReference type="ChEBI" id="CHEBI:18420"/>
        <label>2</label>
    </ligand>
</feature>
<feature type="binding site" evidence="1">
    <location>
        <position position="222"/>
    </location>
    <ligand>
        <name>substrate</name>
    </ligand>
</feature>
<feature type="binding site" evidence="1">
    <location>
        <position position="253"/>
    </location>
    <ligand>
        <name>substrate</name>
    </ligand>
</feature>
<feature type="binding site" evidence="1">
    <location>
        <position position="259"/>
    </location>
    <ligand>
        <name>Mg(2+)</name>
        <dbReference type="ChEBI" id="CHEBI:18420"/>
        <label>2</label>
    </ligand>
</feature>
<proteinExistence type="inferred from homology"/>
<reference key="1">
    <citation type="submission" date="2007-05" db="EMBL/GenBank/DDBJ databases">
        <title>Complete sequence of Geobacter uraniireducens Rf4.</title>
        <authorList>
            <consortium name="US DOE Joint Genome Institute"/>
            <person name="Copeland A."/>
            <person name="Lucas S."/>
            <person name="Lapidus A."/>
            <person name="Barry K."/>
            <person name="Detter J.C."/>
            <person name="Glavina del Rio T."/>
            <person name="Hammon N."/>
            <person name="Israni S."/>
            <person name="Dalin E."/>
            <person name="Tice H."/>
            <person name="Pitluck S."/>
            <person name="Chertkov O."/>
            <person name="Brettin T."/>
            <person name="Bruce D."/>
            <person name="Han C."/>
            <person name="Schmutz J."/>
            <person name="Larimer F."/>
            <person name="Land M."/>
            <person name="Hauser L."/>
            <person name="Kyrpides N."/>
            <person name="Mikhailova N."/>
            <person name="Shelobolina E."/>
            <person name="Aklujkar M."/>
            <person name="Lovley D."/>
            <person name="Richardson P."/>
        </authorList>
    </citation>
    <scope>NUCLEOTIDE SEQUENCE [LARGE SCALE GENOMIC DNA]</scope>
    <source>
        <strain>ATCC BAA-1134 / JCM 13001 / Rf4</strain>
    </source>
</reference>
<sequence length="313" mass="34768">MFSEPGKSKFQIDLRRHLRSQNICDNLIHLICEIAEASKYVINAVRTGDLGVAGTSNLYGEEQLALDVLSDRIMRKRLIHSGVVCNIASEEMDEIYQVTTDSNGLYSVAYDPLDGSSLVDVNLAVGTIVSIFSGCDLLQEGRKQVAAMYILYGPRVSLVYTVGDGVHEFTMNQLMEFNLTRENIRMQPDGNIYSPGGLRNKYNEGDEKFIRYLEAKGCKLRYSGGFVPDINQVLMKGKGLFMYPALNGSPNGKLRLLFELNPMAFIIEHAGGAATNGKIPILDIKPEGLDQRAPIYIGCVEDVNRAMEYVYKS</sequence>
<dbReference type="EC" id="3.1.3.11" evidence="1"/>
<dbReference type="EMBL" id="CP000698">
    <property type="protein sequence ID" value="ABQ26557.1"/>
    <property type="molecule type" value="Genomic_DNA"/>
</dbReference>
<dbReference type="RefSeq" id="WP_011939249.1">
    <property type="nucleotide sequence ID" value="NC_009483.1"/>
</dbReference>
<dbReference type="SMR" id="A5G439"/>
<dbReference type="STRING" id="351605.Gura_2378"/>
<dbReference type="KEGG" id="gur:Gura_2378"/>
<dbReference type="HOGENOM" id="CLU_039977_2_2_7"/>
<dbReference type="OrthoDB" id="9806756at2"/>
<dbReference type="UniPathway" id="UPA00138"/>
<dbReference type="Proteomes" id="UP000006695">
    <property type="component" value="Chromosome"/>
</dbReference>
<dbReference type="GO" id="GO:0005829">
    <property type="term" value="C:cytosol"/>
    <property type="evidence" value="ECO:0007669"/>
    <property type="project" value="TreeGrafter"/>
</dbReference>
<dbReference type="GO" id="GO:0042132">
    <property type="term" value="F:fructose 1,6-bisphosphate 1-phosphatase activity"/>
    <property type="evidence" value="ECO:0007669"/>
    <property type="project" value="UniProtKB-UniRule"/>
</dbReference>
<dbReference type="GO" id="GO:0000287">
    <property type="term" value="F:magnesium ion binding"/>
    <property type="evidence" value="ECO:0007669"/>
    <property type="project" value="UniProtKB-UniRule"/>
</dbReference>
<dbReference type="GO" id="GO:0030388">
    <property type="term" value="P:fructose 1,6-bisphosphate metabolic process"/>
    <property type="evidence" value="ECO:0007669"/>
    <property type="project" value="TreeGrafter"/>
</dbReference>
<dbReference type="GO" id="GO:0006002">
    <property type="term" value="P:fructose 6-phosphate metabolic process"/>
    <property type="evidence" value="ECO:0007669"/>
    <property type="project" value="TreeGrafter"/>
</dbReference>
<dbReference type="GO" id="GO:0006000">
    <property type="term" value="P:fructose metabolic process"/>
    <property type="evidence" value="ECO:0007669"/>
    <property type="project" value="TreeGrafter"/>
</dbReference>
<dbReference type="GO" id="GO:0006094">
    <property type="term" value="P:gluconeogenesis"/>
    <property type="evidence" value="ECO:0007669"/>
    <property type="project" value="UniProtKB-UniRule"/>
</dbReference>
<dbReference type="GO" id="GO:0005986">
    <property type="term" value="P:sucrose biosynthetic process"/>
    <property type="evidence" value="ECO:0007669"/>
    <property type="project" value="TreeGrafter"/>
</dbReference>
<dbReference type="CDD" id="cd00354">
    <property type="entry name" value="FBPase"/>
    <property type="match status" value="1"/>
</dbReference>
<dbReference type="Gene3D" id="3.40.190.80">
    <property type="match status" value="1"/>
</dbReference>
<dbReference type="Gene3D" id="3.30.540.10">
    <property type="entry name" value="Fructose-1,6-Bisphosphatase, subunit A, domain 1"/>
    <property type="match status" value="1"/>
</dbReference>
<dbReference type="HAMAP" id="MF_01855">
    <property type="entry name" value="FBPase_class1"/>
    <property type="match status" value="1"/>
</dbReference>
<dbReference type="InterPro" id="IPR044015">
    <property type="entry name" value="FBPase_C_dom"/>
</dbReference>
<dbReference type="InterPro" id="IPR000146">
    <property type="entry name" value="FBPase_class-1"/>
</dbReference>
<dbReference type="InterPro" id="IPR033391">
    <property type="entry name" value="FBPase_N"/>
</dbReference>
<dbReference type="InterPro" id="IPR028343">
    <property type="entry name" value="FBPtase"/>
</dbReference>
<dbReference type="InterPro" id="IPR020548">
    <property type="entry name" value="Fructose_bisphosphatase_AS"/>
</dbReference>
<dbReference type="InterPro" id="IPR023079">
    <property type="entry name" value="SBPase"/>
</dbReference>
<dbReference type="NCBIfam" id="NF006783">
    <property type="entry name" value="PRK09293.2-4"/>
    <property type="match status" value="1"/>
</dbReference>
<dbReference type="PANTHER" id="PTHR11556">
    <property type="entry name" value="FRUCTOSE-1,6-BISPHOSPHATASE-RELATED"/>
    <property type="match status" value="1"/>
</dbReference>
<dbReference type="PANTHER" id="PTHR11556:SF35">
    <property type="entry name" value="SEDOHEPTULOSE-1,7-BISPHOSPHATASE, CHLOROPLASTIC"/>
    <property type="match status" value="1"/>
</dbReference>
<dbReference type="Pfam" id="PF00316">
    <property type="entry name" value="FBPase"/>
    <property type="match status" value="1"/>
</dbReference>
<dbReference type="Pfam" id="PF18913">
    <property type="entry name" value="FBPase_C"/>
    <property type="match status" value="1"/>
</dbReference>
<dbReference type="PIRSF" id="PIRSF500210">
    <property type="entry name" value="FBPtase"/>
    <property type="match status" value="1"/>
</dbReference>
<dbReference type="PIRSF" id="PIRSF000904">
    <property type="entry name" value="FBPtase_SBPase"/>
    <property type="match status" value="1"/>
</dbReference>
<dbReference type="PRINTS" id="PR01958">
    <property type="entry name" value="S17BPHPHTASE"/>
</dbReference>
<dbReference type="SUPFAM" id="SSF56655">
    <property type="entry name" value="Carbohydrate phosphatase"/>
    <property type="match status" value="1"/>
</dbReference>
<dbReference type="PROSITE" id="PS00124">
    <property type="entry name" value="FBPASE"/>
    <property type="match status" value="1"/>
</dbReference>
<organism>
    <name type="scientific">Geotalea uraniireducens (strain Rf4)</name>
    <name type="common">Geobacter uraniireducens</name>
    <dbReference type="NCBI Taxonomy" id="351605"/>
    <lineage>
        <taxon>Bacteria</taxon>
        <taxon>Pseudomonadati</taxon>
        <taxon>Thermodesulfobacteriota</taxon>
        <taxon>Desulfuromonadia</taxon>
        <taxon>Geobacterales</taxon>
        <taxon>Geobacteraceae</taxon>
        <taxon>Geotalea</taxon>
    </lineage>
</organism>
<accession>A5G439</accession>
<evidence type="ECO:0000255" key="1">
    <source>
        <dbReference type="HAMAP-Rule" id="MF_01855"/>
    </source>
</evidence>
<keyword id="KW-0119">Carbohydrate metabolism</keyword>
<keyword id="KW-0963">Cytoplasm</keyword>
<keyword id="KW-0378">Hydrolase</keyword>
<keyword id="KW-0460">Magnesium</keyword>
<keyword id="KW-0479">Metal-binding</keyword>
<keyword id="KW-1185">Reference proteome</keyword>
<name>F16PA_GEOUR</name>
<protein>
    <recommendedName>
        <fullName evidence="1">Fructose-1,6-bisphosphatase class 1</fullName>
        <shortName evidence="1">FBPase class 1</shortName>
        <ecNumber evidence="1">3.1.3.11</ecNumber>
    </recommendedName>
    <alternativeName>
        <fullName evidence="1">D-fructose-1,6-bisphosphate 1-phosphohydrolase class 1</fullName>
    </alternativeName>
</protein>
<comment type="catalytic activity">
    <reaction evidence="1">
        <text>beta-D-fructose 1,6-bisphosphate + H2O = beta-D-fructose 6-phosphate + phosphate</text>
        <dbReference type="Rhea" id="RHEA:11064"/>
        <dbReference type="ChEBI" id="CHEBI:15377"/>
        <dbReference type="ChEBI" id="CHEBI:32966"/>
        <dbReference type="ChEBI" id="CHEBI:43474"/>
        <dbReference type="ChEBI" id="CHEBI:57634"/>
        <dbReference type="EC" id="3.1.3.11"/>
    </reaction>
</comment>
<comment type="cofactor">
    <cofactor evidence="1">
        <name>Mg(2+)</name>
        <dbReference type="ChEBI" id="CHEBI:18420"/>
    </cofactor>
    <text evidence="1">Binds 2 magnesium ions per subunit.</text>
</comment>
<comment type="pathway">
    <text evidence="1">Carbohydrate biosynthesis; gluconeogenesis.</text>
</comment>
<comment type="subunit">
    <text evidence="1">Homotetramer.</text>
</comment>
<comment type="subcellular location">
    <subcellularLocation>
        <location evidence="1">Cytoplasm</location>
    </subcellularLocation>
</comment>
<comment type="similarity">
    <text evidence="1">Belongs to the FBPase class 1 family.</text>
</comment>